<dbReference type="EC" id="2.1.1.228" evidence="1"/>
<dbReference type="EMBL" id="CP000507">
    <property type="protein sequence ID" value="ABL99098.1"/>
    <property type="molecule type" value="Genomic_DNA"/>
</dbReference>
<dbReference type="RefSeq" id="WP_011759008.1">
    <property type="nucleotide sequence ID" value="NC_008700.1"/>
</dbReference>
<dbReference type="SMR" id="A1S3Z2"/>
<dbReference type="STRING" id="326297.Sama_0891"/>
<dbReference type="KEGG" id="saz:Sama_0891"/>
<dbReference type="eggNOG" id="COG0336">
    <property type="taxonomic scope" value="Bacteria"/>
</dbReference>
<dbReference type="HOGENOM" id="CLU_047363_0_2_6"/>
<dbReference type="OrthoDB" id="9807416at2"/>
<dbReference type="Proteomes" id="UP000009175">
    <property type="component" value="Chromosome"/>
</dbReference>
<dbReference type="GO" id="GO:0005829">
    <property type="term" value="C:cytosol"/>
    <property type="evidence" value="ECO:0007669"/>
    <property type="project" value="TreeGrafter"/>
</dbReference>
<dbReference type="GO" id="GO:0052906">
    <property type="term" value="F:tRNA (guanine(37)-N1)-methyltransferase activity"/>
    <property type="evidence" value="ECO:0007669"/>
    <property type="project" value="UniProtKB-UniRule"/>
</dbReference>
<dbReference type="GO" id="GO:0002939">
    <property type="term" value="P:tRNA N1-guanine methylation"/>
    <property type="evidence" value="ECO:0007669"/>
    <property type="project" value="TreeGrafter"/>
</dbReference>
<dbReference type="CDD" id="cd18080">
    <property type="entry name" value="TrmD-like"/>
    <property type="match status" value="1"/>
</dbReference>
<dbReference type="FunFam" id="1.10.1270.20:FF:000001">
    <property type="entry name" value="tRNA (guanine-N(1)-)-methyltransferase"/>
    <property type="match status" value="1"/>
</dbReference>
<dbReference type="FunFam" id="3.40.1280.10:FF:000001">
    <property type="entry name" value="tRNA (guanine-N(1)-)-methyltransferase"/>
    <property type="match status" value="1"/>
</dbReference>
<dbReference type="Gene3D" id="3.40.1280.10">
    <property type="match status" value="1"/>
</dbReference>
<dbReference type="Gene3D" id="1.10.1270.20">
    <property type="entry name" value="tRNA(m1g37)methyltransferase, domain 2"/>
    <property type="match status" value="1"/>
</dbReference>
<dbReference type="HAMAP" id="MF_00605">
    <property type="entry name" value="TrmD"/>
    <property type="match status" value="1"/>
</dbReference>
<dbReference type="InterPro" id="IPR029028">
    <property type="entry name" value="Alpha/beta_knot_MTases"/>
</dbReference>
<dbReference type="InterPro" id="IPR023148">
    <property type="entry name" value="tRNA_m1G_MeTrfase_C_sf"/>
</dbReference>
<dbReference type="InterPro" id="IPR002649">
    <property type="entry name" value="tRNA_m1G_MeTrfase_TrmD"/>
</dbReference>
<dbReference type="InterPro" id="IPR029026">
    <property type="entry name" value="tRNA_m1G_MTases_N"/>
</dbReference>
<dbReference type="InterPro" id="IPR016009">
    <property type="entry name" value="tRNA_MeTrfase_TRMD/TRM10"/>
</dbReference>
<dbReference type="NCBIfam" id="NF000648">
    <property type="entry name" value="PRK00026.1"/>
    <property type="match status" value="1"/>
</dbReference>
<dbReference type="NCBIfam" id="TIGR00088">
    <property type="entry name" value="trmD"/>
    <property type="match status" value="1"/>
</dbReference>
<dbReference type="PANTHER" id="PTHR46417">
    <property type="entry name" value="TRNA (GUANINE-N(1)-)-METHYLTRANSFERASE"/>
    <property type="match status" value="1"/>
</dbReference>
<dbReference type="PANTHER" id="PTHR46417:SF1">
    <property type="entry name" value="TRNA (GUANINE-N(1)-)-METHYLTRANSFERASE"/>
    <property type="match status" value="1"/>
</dbReference>
<dbReference type="Pfam" id="PF01746">
    <property type="entry name" value="tRNA_m1G_MT"/>
    <property type="match status" value="1"/>
</dbReference>
<dbReference type="PIRSF" id="PIRSF000386">
    <property type="entry name" value="tRNA_mtase"/>
    <property type="match status" value="1"/>
</dbReference>
<dbReference type="SUPFAM" id="SSF75217">
    <property type="entry name" value="alpha/beta knot"/>
    <property type="match status" value="1"/>
</dbReference>
<name>TRMD_SHEAM</name>
<comment type="function">
    <text evidence="1">Specifically methylates guanosine-37 in various tRNAs.</text>
</comment>
<comment type="catalytic activity">
    <reaction evidence="1">
        <text>guanosine(37) in tRNA + S-adenosyl-L-methionine = N(1)-methylguanosine(37) in tRNA + S-adenosyl-L-homocysteine + H(+)</text>
        <dbReference type="Rhea" id="RHEA:36899"/>
        <dbReference type="Rhea" id="RHEA-COMP:10145"/>
        <dbReference type="Rhea" id="RHEA-COMP:10147"/>
        <dbReference type="ChEBI" id="CHEBI:15378"/>
        <dbReference type="ChEBI" id="CHEBI:57856"/>
        <dbReference type="ChEBI" id="CHEBI:59789"/>
        <dbReference type="ChEBI" id="CHEBI:73542"/>
        <dbReference type="ChEBI" id="CHEBI:74269"/>
        <dbReference type="EC" id="2.1.1.228"/>
    </reaction>
</comment>
<comment type="subunit">
    <text evidence="1">Homodimer.</text>
</comment>
<comment type="subcellular location">
    <subcellularLocation>
        <location evidence="1">Cytoplasm</location>
    </subcellularLocation>
</comment>
<comment type="similarity">
    <text evidence="1">Belongs to the RNA methyltransferase TrmD family.</text>
</comment>
<evidence type="ECO:0000255" key="1">
    <source>
        <dbReference type="HAMAP-Rule" id="MF_00605"/>
    </source>
</evidence>
<keyword id="KW-0963">Cytoplasm</keyword>
<keyword id="KW-0489">Methyltransferase</keyword>
<keyword id="KW-1185">Reference proteome</keyword>
<keyword id="KW-0949">S-adenosyl-L-methionine</keyword>
<keyword id="KW-0808">Transferase</keyword>
<keyword id="KW-0819">tRNA processing</keyword>
<proteinExistence type="inferred from homology"/>
<accession>A1S3Z2</accession>
<sequence>MWLGVITLFPEMFRAITDFGVTGRAIKNGLLELHTWNPRDFTHDRHRTVDDRPYGGGPGMLMMVQPLKDAIQAARTAAGDGAKVIYLSPQGRKLTQRGATELAETQKLILVCGRYEGIDERIIQTEVDEEWSIGDYVLSGGELPAMTLIDAVSRLVPGVLGKQASAEQDSFSDGLLDCPHYTRPESLDGLEVPAVLLGGNHEDIRRWRLKQSLGRTFLRRPELFENLALTDEQTRLLAQFVDEMDSPQKS</sequence>
<gene>
    <name evidence="1" type="primary">trmD</name>
    <name type="ordered locus">Sama_0891</name>
</gene>
<reference key="1">
    <citation type="submission" date="2006-12" db="EMBL/GenBank/DDBJ databases">
        <title>Complete sequence of Shewanella amazonensis SB2B.</title>
        <authorList>
            <consortium name="US DOE Joint Genome Institute"/>
            <person name="Copeland A."/>
            <person name="Lucas S."/>
            <person name="Lapidus A."/>
            <person name="Barry K."/>
            <person name="Detter J.C."/>
            <person name="Glavina del Rio T."/>
            <person name="Hammon N."/>
            <person name="Israni S."/>
            <person name="Dalin E."/>
            <person name="Tice H."/>
            <person name="Pitluck S."/>
            <person name="Munk A.C."/>
            <person name="Brettin T."/>
            <person name="Bruce D."/>
            <person name="Han C."/>
            <person name="Tapia R."/>
            <person name="Gilna P."/>
            <person name="Schmutz J."/>
            <person name="Larimer F."/>
            <person name="Land M."/>
            <person name="Hauser L."/>
            <person name="Kyrpides N."/>
            <person name="Mikhailova N."/>
            <person name="Fredrickson J."/>
            <person name="Richardson P."/>
        </authorList>
    </citation>
    <scope>NUCLEOTIDE SEQUENCE [LARGE SCALE GENOMIC DNA]</scope>
    <source>
        <strain>ATCC BAA-1098 / SB2B</strain>
    </source>
</reference>
<protein>
    <recommendedName>
        <fullName evidence="1">tRNA (guanine-N(1)-)-methyltransferase</fullName>
        <ecNumber evidence="1">2.1.1.228</ecNumber>
    </recommendedName>
    <alternativeName>
        <fullName evidence="1">M1G-methyltransferase</fullName>
    </alternativeName>
    <alternativeName>
        <fullName evidence="1">tRNA [GM37] methyltransferase</fullName>
    </alternativeName>
</protein>
<organism>
    <name type="scientific">Shewanella amazonensis (strain ATCC BAA-1098 / SB2B)</name>
    <dbReference type="NCBI Taxonomy" id="326297"/>
    <lineage>
        <taxon>Bacteria</taxon>
        <taxon>Pseudomonadati</taxon>
        <taxon>Pseudomonadota</taxon>
        <taxon>Gammaproteobacteria</taxon>
        <taxon>Alteromonadales</taxon>
        <taxon>Shewanellaceae</taxon>
        <taxon>Shewanella</taxon>
    </lineage>
</organism>
<feature type="chain" id="PRO_1000006512" description="tRNA (guanine-N(1)-)-methyltransferase">
    <location>
        <begin position="1"/>
        <end position="250"/>
    </location>
</feature>
<feature type="binding site" evidence="1">
    <location>
        <position position="113"/>
    </location>
    <ligand>
        <name>S-adenosyl-L-methionine</name>
        <dbReference type="ChEBI" id="CHEBI:59789"/>
    </ligand>
</feature>
<feature type="binding site" evidence="1">
    <location>
        <begin position="133"/>
        <end position="138"/>
    </location>
    <ligand>
        <name>S-adenosyl-L-methionine</name>
        <dbReference type="ChEBI" id="CHEBI:59789"/>
    </ligand>
</feature>